<name>RL9_MAGMM</name>
<evidence type="ECO:0000255" key="1">
    <source>
        <dbReference type="HAMAP-Rule" id="MF_00503"/>
    </source>
</evidence>
<evidence type="ECO:0000305" key="2"/>
<feature type="chain" id="PRO_1000014805" description="Large ribosomal subunit protein bL9">
    <location>
        <begin position="1"/>
        <end position="149"/>
    </location>
</feature>
<gene>
    <name evidence="1" type="primary">rplI</name>
    <name type="ordered locus">Mmc1_2458</name>
</gene>
<accession>A0LAG5</accession>
<dbReference type="EMBL" id="CP000471">
    <property type="protein sequence ID" value="ABK44958.1"/>
    <property type="molecule type" value="Genomic_DNA"/>
</dbReference>
<dbReference type="RefSeq" id="WP_011714077.1">
    <property type="nucleotide sequence ID" value="NC_008576.1"/>
</dbReference>
<dbReference type="SMR" id="A0LAG5"/>
<dbReference type="STRING" id="156889.Mmc1_2458"/>
<dbReference type="KEGG" id="mgm:Mmc1_2458"/>
<dbReference type="eggNOG" id="COG0359">
    <property type="taxonomic scope" value="Bacteria"/>
</dbReference>
<dbReference type="HOGENOM" id="CLU_078938_4_1_5"/>
<dbReference type="OrthoDB" id="9788336at2"/>
<dbReference type="Proteomes" id="UP000002586">
    <property type="component" value="Chromosome"/>
</dbReference>
<dbReference type="GO" id="GO:1990904">
    <property type="term" value="C:ribonucleoprotein complex"/>
    <property type="evidence" value="ECO:0007669"/>
    <property type="project" value="UniProtKB-KW"/>
</dbReference>
<dbReference type="GO" id="GO:0005840">
    <property type="term" value="C:ribosome"/>
    <property type="evidence" value="ECO:0007669"/>
    <property type="project" value="UniProtKB-KW"/>
</dbReference>
<dbReference type="GO" id="GO:0019843">
    <property type="term" value="F:rRNA binding"/>
    <property type="evidence" value="ECO:0007669"/>
    <property type="project" value="UniProtKB-UniRule"/>
</dbReference>
<dbReference type="GO" id="GO:0003735">
    <property type="term" value="F:structural constituent of ribosome"/>
    <property type="evidence" value="ECO:0007669"/>
    <property type="project" value="InterPro"/>
</dbReference>
<dbReference type="GO" id="GO:0006412">
    <property type="term" value="P:translation"/>
    <property type="evidence" value="ECO:0007669"/>
    <property type="project" value="UniProtKB-UniRule"/>
</dbReference>
<dbReference type="Gene3D" id="3.10.430.100">
    <property type="entry name" value="Ribosomal protein L9, C-terminal domain"/>
    <property type="match status" value="1"/>
</dbReference>
<dbReference type="Gene3D" id="3.40.5.10">
    <property type="entry name" value="Ribosomal protein L9, N-terminal domain"/>
    <property type="match status" value="1"/>
</dbReference>
<dbReference type="HAMAP" id="MF_00503">
    <property type="entry name" value="Ribosomal_bL9"/>
    <property type="match status" value="1"/>
</dbReference>
<dbReference type="InterPro" id="IPR000244">
    <property type="entry name" value="Ribosomal_bL9"/>
</dbReference>
<dbReference type="InterPro" id="IPR009027">
    <property type="entry name" value="Ribosomal_bL9/RNase_H1_N"/>
</dbReference>
<dbReference type="InterPro" id="IPR020594">
    <property type="entry name" value="Ribosomal_bL9_bac/chp"/>
</dbReference>
<dbReference type="InterPro" id="IPR020069">
    <property type="entry name" value="Ribosomal_bL9_C"/>
</dbReference>
<dbReference type="InterPro" id="IPR036791">
    <property type="entry name" value="Ribosomal_bL9_C_sf"/>
</dbReference>
<dbReference type="InterPro" id="IPR020070">
    <property type="entry name" value="Ribosomal_bL9_N"/>
</dbReference>
<dbReference type="InterPro" id="IPR036935">
    <property type="entry name" value="Ribosomal_bL9_N_sf"/>
</dbReference>
<dbReference type="NCBIfam" id="TIGR00158">
    <property type="entry name" value="L9"/>
    <property type="match status" value="1"/>
</dbReference>
<dbReference type="PANTHER" id="PTHR21368">
    <property type="entry name" value="50S RIBOSOMAL PROTEIN L9"/>
    <property type="match status" value="1"/>
</dbReference>
<dbReference type="Pfam" id="PF03948">
    <property type="entry name" value="Ribosomal_L9_C"/>
    <property type="match status" value="1"/>
</dbReference>
<dbReference type="Pfam" id="PF01281">
    <property type="entry name" value="Ribosomal_L9_N"/>
    <property type="match status" value="1"/>
</dbReference>
<dbReference type="SUPFAM" id="SSF55658">
    <property type="entry name" value="L9 N-domain-like"/>
    <property type="match status" value="1"/>
</dbReference>
<dbReference type="SUPFAM" id="SSF55653">
    <property type="entry name" value="Ribosomal protein L9 C-domain"/>
    <property type="match status" value="1"/>
</dbReference>
<dbReference type="PROSITE" id="PS00651">
    <property type="entry name" value="RIBOSOMAL_L9"/>
    <property type="match status" value="1"/>
</dbReference>
<organism>
    <name type="scientific">Magnetococcus marinus (strain ATCC BAA-1437 / JCM 17883 / MC-1)</name>
    <dbReference type="NCBI Taxonomy" id="156889"/>
    <lineage>
        <taxon>Bacteria</taxon>
        <taxon>Pseudomonadati</taxon>
        <taxon>Pseudomonadota</taxon>
        <taxon>Alphaproteobacteria</taxon>
        <taxon>Magnetococcales</taxon>
        <taxon>Magnetococcaceae</taxon>
        <taxon>Magnetococcus</taxon>
    </lineage>
</organism>
<sequence>MEVILLEKIGKIGNLGEVVKVRSGYGRNFLIPQGKALPATSENKSVFEAQRADYEARQAEILADAETLAAKVDEVSVVMKRPAGAMDKLFGSVTSADIAVFYKDLGLNIPRNIIDVLTPIRTLGEHQVRVRLHPDVVRVISIQVERAVK</sequence>
<comment type="function">
    <text evidence="1">Binds to the 23S rRNA.</text>
</comment>
<comment type="similarity">
    <text evidence="1">Belongs to the bacterial ribosomal protein bL9 family.</text>
</comment>
<reference key="1">
    <citation type="journal article" date="2009" name="Appl. Environ. Microbiol.">
        <title>Complete genome sequence of the chemolithoautotrophic marine magnetotactic coccus strain MC-1.</title>
        <authorList>
            <person name="Schubbe S."/>
            <person name="Williams T.J."/>
            <person name="Xie G."/>
            <person name="Kiss H.E."/>
            <person name="Brettin T.S."/>
            <person name="Martinez D."/>
            <person name="Ross C.A."/>
            <person name="Schuler D."/>
            <person name="Cox B.L."/>
            <person name="Nealson K.H."/>
            <person name="Bazylinski D.A."/>
        </authorList>
    </citation>
    <scope>NUCLEOTIDE SEQUENCE [LARGE SCALE GENOMIC DNA]</scope>
    <source>
        <strain>ATCC BAA-1437 / JCM 17883 / MC-1</strain>
    </source>
</reference>
<protein>
    <recommendedName>
        <fullName evidence="1">Large ribosomal subunit protein bL9</fullName>
    </recommendedName>
    <alternativeName>
        <fullName evidence="2">50S ribosomal protein L9</fullName>
    </alternativeName>
</protein>
<proteinExistence type="inferred from homology"/>
<keyword id="KW-1185">Reference proteome</keyword>
<keyword id="KW-0687">Ribonucleoprotein</keyword>
<keyword id="KW-0689">Ribosomal protein</keyword>
<keyword id="KW-0694">RNA-binding</keyword>
<keyword id="KW-0699">rRNA-binding</keyword>